<keyword id="KW-0963">Cytoplasm</keyword>
<keyword id="KW-0238">DNA-binding</keyword>
<keyword id="KW-1185">Reference proteome</keyword>
<keyword id="KW-0677">Repeat</keyword>
<keyword id="KW-0804">Transcription</keyword>
<keyword id="KW-0805">Transcription regulation</keyword>
<gene>
    <name evidence="1" type="primary">mraZ</name>
    <name type="ordered locus">Mlut_13690</name>
</gene>
<sequence length="143" mass="16274">MFLGTYTPRLDEKSRLILPAKFREELAEGLVLTRGQERCIYVFSAREFERVHEQMRSAPLSSRQARDYIRVFLSGASDEVPDKQGRVTVPAPLRQYAGLDRDVTVIGAGTRVEIWDSESWNTYLAEQEAAFSETDEDVLPGVF</sequence>
<organism>
    <name type="scientific">Micrococcus luteus (strain ATCC 4698 / DSM 20030 / JCM 1464 / CCM 169 / CCUG 5858 / IAM 1056 / NBRC 3333 / NCIMB 9278 / NCTC 2665 / VKM Ac-2230)</name>
    <name type="common">Micrococcus lysodeikticus</name>
    <dbReference type="NCBI Taxonomy" id="465515"/>
    <lineage>
        <taxon>Bacteria</taxon>
        <taxon>Bacillati</taxon>
        <taxon>Actinomycetota</taxon>
        <taxon>Actinomycetes</taxon>
        <taxon>Micrococcales</taxon>
        <taxon>Micrococcaceae</taxon>
        <taxon>Micrococcus</taxon>
    </lineage>
</organism>
<protein>
    <recommendedName>
        <fullName>Transcriptional regulator MraZ</fullName>
    </recommendedName>
</protein>
<accession>C5CA39</accession>
<evidence type="ECO:0000255" key="1">
    <source>
        <dbReference type="HAMAP-Rule" id="MF_01008"/>
    </source>
</evidence>
<evidence type="ECO:0000255" key="2">
    <source>
        <dbReference type="PROSITE-ProRule" id="PRU01076"/>
    </source>
</evidence>
<name>MRAZ_MICLC</name>
<reference key="1">
    <citation type="journal article" date="2010" name="J. Bacteriol.">
        <title>Genome sequence of the Fleming strain of Micrococcus luteus, a simple free-living actinobacterium.</title>
        <authorList>
            <person name="Young M."/>
            <person name="Artsatbanov V."/>
            <person name="Beller H.R."/>
            <person name="Chandra G."/>
            <person name="Chater K.F."/>
            <person name="Dover L.G."/>
            <person name="Goh E.B."/>
            <person name="Kahan T."/>
            <person name="Kaprelyants A.S."/>
            <person name="Kyrpides N."/>
            <person name="Lapidus A."/>
            <person name="Lowry S.R."/>
            <person name="Lykidis A."/>
            <person name="Mahillon J."/>
            <person name="Markowitz V."/>
            <person name="Mavromatis K."/>
            <person name="Mukamolova G.V."/>
            <person name="Oren A."/>
            <person name="Rokem J.S."/>
            <person name="Smith M.C."/>
            <person name="Young D.I."/>
            <person name="Greenblatt C.L."/>
        </authorList>
    </citation>
    <scope>NUCLEOTIDE SEQUENCE [LARGE SCALE GENOMIC DNA]</scope>
    <source>
        <strain>ATCC 4698 / DSM 20030 / JCM 1464 / CCM 169 / CCUG 5858 / IAM 1056 / NBRC 3333 / NCIMB 9278 / NCTC 2665 / VKM Ac-2230</strain>
    </source>
</reference>
<proteinExistence type="inferred from homology"/>
<comment type="subunit">
    <text evidence="1">Forms oligomers.</text>
</comment>
<comment type="subcellular location">
    <subcellularLocation>
        <location evidence="1">Cytoplasm</location>
        <location evidence="1">Nucleoid</location>
    </subcellularLocation>
</comment>
<comment type="similarity">
    <text evidence="1">Belongs to the MraZ family.</text>
</comment>
<dbReference type="EMBL" id="CP001628">
    <property type="protein sequence ID" value="ACS30874.1"/>
    <property type="molecule type" value="Genomic_DNA"/>
</dbReference>
<dbReference type="RefSeq" id="WP_002854575.1">
    <property type="nucleotide sequence ID" value="NZ_WBMF01000132.1"/>
</dbReference>
<dbReference type="SMR" id="C5CA39"/>
<dbReference type="STRING" id="465515.Mlut_13690"/>
<dbReference type="EnsemblBacteria" id="ACS30874">
    <property type="protein sequence ID" value="ACS30874"/>
    <property type="gene ID" value="Mlut_13690"/>
</dbReference>
<dbReference type="GeneID" id="93343251"/>
<dbReference type="KEGG" id="mlu:Mlut_13690"/>
<dbReference type="eggNOG" id="COG2001">
    <property type="taxonomic scope" value="Bacteria"/>
</dbReference>
<dbReference type="HOGENOM" id="CLU_107907_0_5_11"/>
<dbReference type="Proteomes" id="UP000000738">
    <property type="component" value="Chromosome"/>
</dbReference>
<dbReference type="GO" id="GO:0005737">
    <property type="term" value="C:cytoplasm"/>
    <property type="evidence" value="ECO:0007669"/>
    <property type="project" value="UniProtKB-UniRule"/>
</dbReference>
<dbReference type="GO" id="GO:0009295">
    <property type="term" value="C:nucleoid"/>
    <property type="evidence" value="ECO:0007669"/>
    <property type="project" value="UniProtKB-SubCell"/>
</dbReference>
<dbReference type="GO" id="GO:0003700">
    <property type="term" value="F:DNA-binding transcription factor activity"/>
    <property type="evidence" value="ECO:0007669"/>
    <property type="project" value="UniProtKB-UniRule"/>
</dbReference>
<dbReference type="GO" id="GO:0000976">
    <property type="term" value="F:transcription cis-regulatory region binding"/>
    <property type="evidence" value="ECO:0007669"/>
    <property type="project" value="TreeGrafter"/>
</dbReference>
<dbReference type="GO" id="GO:2000143">
    <property type="term" value="P:negative regulation of DNA-templated transcription initiation"/>
    <property type="evidence" value="ECO:0007669"/>
    <property type="project" value="TreeGrafter"/>
</dbReference>
<dbReference type="CDD" id="cd16321">
    <property type="entry name" value="MraZ_C"/>
    <property type="match status" value="1"/>
</dbReference>
<dbReference type="CDD" id="cd16320">
    <property type="entry name" value="MraZ_N"/>
    <property type="match status" value="1"/>
</dbReference>
<dbReference type="Gene3D" id="3.40.1550.20">
    <property type="entry name" value="Transcriptional regulator MraZ domain"/>
    <property type="match status" value="1"/>
</dbReference>
<dbReference type="HAMAP" id="MF_01008">
    <property type="entry name" value="MraZ"/>
    <property type="match status" value="1"/>
</dbReference>
<dbReference type="InterPro" id="IPR003444">
    <property type="entry name" value="MraZ"/>
</dbReference>
<dbReference type="InterPro" id="IPR035644">
    <property type="entry name" value="MraZ_C"/>
</dbReference>
<dbReference type="InterPro" id="IPR020603">
    <property type="entry name" value="MraZ_dom"/>
</dbReference>
<dbReference type="InterPro" id="IPR035642">
    <property type="entry name" value="MraZ_N"/>
</dbReference>
<dbReference type="InterPro" id="IPR038619">
    <property type="entry name" value="MraZ_sf"/>
</dbReference>
<dbReference type="InterPro" id="IPR007159">
    <property type="entry name" value="SpoVT-AbrB_dom"/>
</dbReference>
<dbReference type="InterPro" id="IPR037914">
    <property type="entry name" value="SpoVT-AbrB_sf"/>
</dbReference>
<dbReference type="NCBIfam" id="TIGR00242">
    <property type="entry name" value="division/cell wall cluster transcriptional repressor MraZ"/>
    <property type="match status" value="1"/>
</dbReference>
<dbReference type="PANTHER" id="PTHR34701">
    <property type="entry name" value="TRANSCRIPTIONAL REGULATOR MRAZ"/>
    <property type="match status" value="1"/>
</dbReference>
<dbReference type="PANTHER" id="PTHR34701:SF1">
    <property type="entry name" value="TRANSCRIPTIONAL REGULATOR MRAZ"/>
    <property type="match status" value="1"/>
</dbReference>
<dbReference type="Pfam" id="PF02381">
    <property type="entry name" value="MraZ"/>
    <property type="match status" value="2"/>
</dbReference>
<dbReference type="SUPFAM" id="SSF89447">
    <property type="entry name" value="AbrB/MazE/MraZ-like"/>
    <property type="match status" value="1"/>
</dbReference>
<dbReference type="PROSITE" id="PS51740">
    <property type="entry name" value="SPOVT_ABRB"/>
    <property type="match status" value="2"/>
</dbReference>
<feature type="chain" id="PRO_1000213179" description="Transcriptional regulator MraZ">
    <location>
        <begin position="1"/>
        <end position="143"/>
    </location>
</feature>
<feature type="domain" description="SpoVT-AbrB 1" evidence="2">
    <location>
        <begin position="5"/>
        <end position="47"/>
    </location>
</feature>
<feature type="domain" description="SpoVT-AbrB 2" evidence="2">
    <location>
        <begin position="76"/>
        <end position="119"/>
    </location>
</feature>